<accession>A0A4Y5QVX6</accession>
<reference key="1">
    <citation type="journal article" date="2019" name="Plant Physiol.">
        <title>Gene networks underlying cannabinoid and terpenoid accumulation in cannabis.</title>
        <authorList>
            <person name="Zager J.J."/>
            <person name="Lange I."/>
            <person name="Srividya N."/>
            <person name="Smith A."/>
            <person name="Lange B.M."/>
        </authorList>
    </citation>
    <scope>NUCLEOTIDE SEQUENCE [MRNA]</scope>
    <scope>FUNCTION</scope>
    <scope>CATALYTIC ACTIVITY</scope>
    <scope>PATHWAY</scope>
    <scope>TISSUE SPECIFICITY</scope>
    <source>
        <strain>cv. Black Lime</strain>
        <strain>cv. Blackberry Kush</strain>
        <strain>cv. Canna Tsu</strain>
        <strain>cv. Cherry Chem</strain>
        <strain>cv. Mama Thai</strain>
        <strain>cv. Sour Diesel</strain>
        <strain>cv. Terple</strain>
        <strain>cv. Valley Fire</strain>
        <strain>cv. White Cookies</strain>
        <tissue>Trichome gland</tissue>
    </source>
</reference>
<evidence type="ECO:0000250" key="1">
    <source>
        <dbReference type="UniProtKB" id="A0A1C9J6A7"/>
    </source>
</evidence>
<evidence type="ECO:0000250" key="2">
    <source>
        <dbReference type="UniProtKB" id="Q40577"/>
    </source>
</evidence>
<evidence type="ECO:0000269" key="3">
    <source>
    </source>
</evidence>
<evidence type="ECO:0000303" key="4">
    <source>
    </source>
</evidence>
<evidence type="ECO:0000305" key="5"/>
<proteinExistence type="evidence at protein level"/>
<organism>
    <name type="scientific">Cannabis sativa</name>
    <name type="common">Hemp</name>
    <name type="synonym">Marijuana</name>
    <dbReference type="NCBI Taxonomy" id="3483"/>
    <lineage>
        <taxon>Eukaryota</taxon>
        <taxon>Viridiplantae</taxon>
        <taxon>Streptophyta</taxon>
        <taxon>Embryophyta</taxon>
        <taxon>Tracheophyta</taxon>
        <taxon>Spermatophyta</taxon>
        <taxon>Magnoliopsida</taxon>
        <taxon>eudicotyledons</taxon>
        <taxon>Gunneridae</taxon>
        <taxon>Pentapetalae</taxon>
        <taxon>rosids</taxon>
        <taxon>fabids</taxon>
        <taxon>Rosales</taxon>
        <taxon>Cannabaceae</taxon>
        <taxon>Cannabis</taxon>
    </lineage>
</organism>
<protein>
    <recommendedName>
        <fullName evidence="4">Hedycaryol synthase TPS20CT</fullName>
        <ecNumber evidence="3">4.2.3.174</ecNumber>
    </recommendedName>
    <alternativeName>
        <fullName evidence="4">Terpene synthase 20 CT</fullName>
        <shortName evidence="4">CsTPS20CT</shortName>
    </alternativeName>
</protein>
<dbReference type="EC" id="4.2.3.174" evidence="3"/>
<dbReference type="EMBL" id="MK801762">
    <property type="protein sequence ID" value="QCY41290.1"/>
    <property type="molecule type" value="mRNA"/>
</dbReference>
<dbReference type="SMR" id="A0A4Y5QVX6"/>
<dbReference type="OrthoDB" id="1143271at2759"/>
<dbReference type="UniPathway" id="UPA00213"/>
<dbReference type="Proteomes" id="UP000596661">
    <property type="component" value="Unplaced"/>
</dbReference>
<dbReference type="GO" id="GO:0000287">
    <property type="term" value="F:magnesium ion binding"/>
    <property type="evidence" value="ECO:0007669"/>
    <property type="project" value="InterPro"/>
</dbReference>
<dbReference type="GO" id="GO:0010333">
    <property type="term" value="F:terpene synthase activity"/>
    <property type="evidence" value="ECO:0007669"/>
    <property type="project" value="InterPro"/>
</dbReference>
<dbReference type="GO" id="GO:0016102">
    <property type="term" value="P:diterpenoid biosynthetic process"/>
    <property type="evidence" value="ECO:0007669"/>
    <property type="project" value="InterPro"/>
</dbReference>
<dbReference type="CDD" id="cd00684">
    <property type="entry name" value="Terpene_cyclase_plant_C1"/>
    <property type="match status" value="1"/>
</dbReference>
<dbReference type="FunFam" id="1.10.600.10:FF:000007">
    <property type="entry name" value="Isoprene synthase, chloroplastic"/>
    <property type="match status" value="1"/>
</dbReference>
<dbReference type="FunFam" id="1.50.10.130:FF:000001">
    <property type="entry name" value="Isoprene synthase, chloroplastic"/>
    <property type="match status" value="1"/>
</dbReference>
<dbReference type="Gene3D" id="1.10.600.10">
    <property type="entry name" value="Farnesyl Diphosphate Synthase"/>
    <property type="match status" value="1"/>
</dbReference>
<dbReference type="Gene3D" id="1.50.10.130">
    <property type="entry name" value="Terpene synthase, N-terminal domain"/>
    <property type="match status" value="1"/>
</dbReference>
<dbReference type="InterPro" id="IPR008949">
    <property type="entry name" value="Isoprenoid_synthase_dom_sf"/>
</dbReference>
<dbReference type="InterPro" id="IPR034741">
    <property type="entry name" value="Terpene_cyclase-like_1_C"/>
</dbReference>
<dbReference type="InterPro" id="IPR044814">
    <property type="entry name" value="Terpene_cyclase_plant_C1"/>
</dbReference>
<dbReference type="InterPro" id="IPR001906">
    <property type="entry name" value="Terpene_synth_N"/>
</dbReference>
<dbReference type="InterPro" id="IPR036965">
    <property type="entry name" value="Terpene_synth_N_sf"/>
</dbReference>
<dbReference type="InterPro" id="IPR050148">
    <property type="entry name" value="Terpene_synthase-like"/>
</dbReference>
<dbReference type="InterPro" id="IPR005630">
    <property type="entry name" value="Terpene_synthase_metal-bd"/>
</dbReference>
<dbReference type="InterPro" id="IPR008930">
    <property type="entry name" value="Terpenoid_cyclase/PrenylTrfase"/>
</dbReference>
<dbReference type="PANTHER" id="PTHR31225:SF221">
    <property type="entry name" value="(-)-GERMACRENE D SYNTHASE"/>
    <property type="match status" value="1"/>
</dbReference>
<dbReference type="PANTHER" id="PTHR31225">
    <property type="entry name" value="OS04G0344100 PROTEIN-RELATED"/>
    <property type="match status" value="1"/>
</dbReference>
<dbReference type="Pfam" id="PF01397">
    <property type="entry name" value="Terpene_synth"/>
    <property type="match status" value="1"/>
</dbReference>
<dbReference type="Pfam" id="PF03936">
    <property type="entry name" value="Terpene_synth_C"/>
    <property type="match status" value="1"/>
</dbReference>
<dbReference type="SFLD" id="SFLDS00005">
    <property type="entry name" value="Isoprenoid_Synthase_Type_I"/>
    <property type="match status" value="1"/>
</dbReference>
<dbReference type="SFLD" id="SFLDG01019">
    <property type="entry name" value="Terpene_Cyclase_Like_1_C_Termi"/>
    <property type="match status" value="1"/>
</dbReference>
<dbReference type="SUPFAM" id="SSF48239">
    <property type="entry name" value="Terpenoid cyclases/Protein prenyltransferases"/>
    <property type="match status" value="1"/>
</dbReference>
<dbReference type="SUPFAM" id="SSF48576">
    <property type="entry name" value="Terpenoid synthases"/>
    <property type="match status" value="1"/>
</dbReference>
<gene>
    <name evidence="4" type="primary">TPS20CT</name>
</gene>
<name>T20CT_CANSA</name>
<feature type="chain" id="PRO_0000460904" description="Hedycaryol synthase TPS20CT">
    <location>
        <begin position="1"/>
        <end position="551"/>
    </location>
</feature>
<feature type="short sequence motif" description="DDXXD motif" evidence="2">
    <location>
        <begin position="303"/>
        <end position="307"/>
    </location>
</feature>
<feature type="binding site" evidence="2">
    <location>
        <position position="266"/>
    </location>
    <ligand>
        <name>(2E,6E)-farnesyl diphosphate</name>
        <dbReference type="ChEBI" id="CHEBI:175763"/>
    </ligand>
</feature>
<feature type="binding site" evidence="2">
    <location>
        <position position="303"/>
    </location>
    <ligand>
        <name>(2E,6E)-farnesyl diphosphate</name>
        <dbReference type="ChEBI" id="CHEBI:175763"/>
    </ligand>
</feature>
<feature type="binding site" evidence="2">
    <location>
        <position position="303"/>
    </location>
    <ligand>
        <name>Mg(2+)</name>
        <dbReference type="ChEBI" id="CHEBI:18420"/>
        <label>1</label>
    </ligand>
</feature>
<feature type="binding site" evidence="2">
    <location>
        <position position="303"/>
    </location>
    <ligand>
        <name>Mg(2+)</name>
        <dbReference type="ChEBI" id="CHEBI:18420"/>
        <label>2</label>
    </ligand>
</feature>
<feature type="binding site" evidence="2">
    <location>
        <position position="307"/>
    </location>
    <ligand>
        <name>(2E,6E)-farnesyl diphosphate</name>
        <dbReference type="ChEBI" id="CHEBI:175763"/>
    </ligand>
</feature>
<feature type="binding site" evidence="2">
    <location>
        <position position="307"/>
    </location>
    <ligand>
        <name>Mg(2+)</name>
        <dbReference type="ChEBI" id="CHEBI:18420"/>
        <label>1</label>
    </ligand>
</feature>
<feature type="binding site" evidence="2">
    <location>
        <position position="307"/>
    </location>
    <ligand>
        <name>Mg(2+)</name>
        <dbReference type="ChEBI" id="CHEBI:18420"/>
        <label>2</label>
    </ligand>
</feature>
<feature type="binding site" evidence="2">
    <location>
        <position position="444"/>
    </location>
    <ligand>
        <name>(2E,6E)-farnesyl diphosphate</name>
        <dbReference type="ChEBI" id="CHEBI:175763"/>
    </ligand>
</feature>
<feature type="binding site" evidence="2">
    <location>
        <position position="447"/>
    </location>
    <ligand>
        <name>(2E,6E)-farnesyl diphosphate</name>
        <dbReference type="ChEBI" id="CHEBI:175763"/>
    </ligand>
</feature>
<feature type="binding site" evidence="2">
    <location>
        <position position="447"/>
    </location>
    <ligand>
        <name>Mg(2+)</name>
        <dbReference type="ChEBI" id="CHEBI:18420"/>
        <label>3</label>
    </ligand>
</feature>
<feature type="binding site" evidence="2">
    <location>
        <position position="451"/>
    </location>
    <ligand>
        <name>Mg(2+)</name>
        <dbReference type="ChEBI" id="CHEBI:18420"/>
        <label>3</label>
    </ligand>
</feature>
<feature type="binding site" evidence="2">
    <location>
        <position position="455"/>
    </location>
    <ligand>
        <name>Mg(2+)</name>
        <dbReference type="ChEBI" id="CHEBI:18420"/>
        <label>3</label>
    </ligand>
</feature>
<sequence>MSNIQVLASSQLSDKIIARPTTKFHPSIWGDRFLHYNISEQDLVCKQEKVEELIQVVKKEILSSNHDQLKLIDNLQRLGLSYHFESEIEKLLEQLSITHHQNHHDLHDASLWFRLLRQHGFNVSSSIFEKFKDEEGNFKESLITDVPGLLSLYEASHLSYVGESILDEALAFTTTHLKAIVANSKDHPLSHQISIVLHRPLRKTIERLHARFYISIYEKDASHNKLLLELAKLDFNLLQCFHKKELSEITRWWKEHEFAKKFPFARDRMVELYFWILGVYYEPKYSRARKLLTKVIALTSITDDIYDAYGTIDELQLLTKAIQRWDINCMDKLKQEYLKTYYKVMLDSYEEFEKELKKEELYKLEYAKEEMKRIIGGYFEEARWLNEGYFPSFDEHLRVSYVSSGNVLLIATSFVGMHDVVTHETLDWLSKDPKIVSASTLLSRFMDDIGSRKFEQKRNHIPSTVDCYMKQYGVSEEEAIKELNKRVDTHWKEINEDFIRPAVVPFPILVRVLNFTKIVDLLYKEGDDQYTNVGKVLKESIAALLIDSIPL</sequence>
<keyword id="KW-0456">Lyase</keyword>
<keyword id="KW-0460">Magnesium</keyword>
<keyword id="KW-0479">Metal-binding</keyword>
<comment type="function">
    <text evidence="3">Involved in sesquiterpene olefins biosynthesis, constituants of cannabinoids and terpenoids-rich resins (PubMed:31138625). Catalyzes primarily the conversion of (2E)-farnesyl diphosphate to hedycaryol, which is spontaneously converted to elemol as a thermal degradation product (PubMed:31138625).</text>
</comment>
<comment type="catalytic activity">
    <reaction evidence="3">
        <text>(2E,6E)-farnesyl diphosphate + H2O = (2E,6E)-hedycaryol + diphosphate</text>
        <dbReference type="Rhea" id="RHEA:54056"/>
        <dbReference type="ChEBI" id="CHEBI:15377"/>
        <dbReference type="ChEBI" id="CHEBI:33019"/>
        <dbReference type="ChEBI" id="CHEBI:138043"/>
        <dbReference type="ChEBI" id="CHEBI:175763"/>
        <dbReference type="EC" id="4.2.3.174"/>
    </reaction>
    <physiologicalReaction direction="left-to-right" evidence="3">
        <dbReference type="Rhea" id="RHEA:54057"/>
    </physiologicalReaction>
</comment>
<comment type="cofactor">
    <cofactor evidence="1">
        <name>Mg(2+)</name>
        <dbReference type="ChEBI" id="CHEBI:18420"/>
    </cofactor>
    <cofactor evidence="1">
        <name>Mn(2+)</name>
        <dbReference type="ChEBI" id="CHEBI:29035"/>
    </cofactor>
    <text evidence="1">Binds 3 Mg(2+) or Mn(2+) ions per subunit.</text>
</comment>
<comment type="pathway">
    <text evidence="3">Secondary metabolite biosynthesis; terpenoid biosynthesis.</text>
</comment>
<comment type="tissue specificity">
    <text evidence="3">Highly expressed in glandular trichomes.</text>
</comment>
<comment type="domain">
    <text evidence="2">The Asp-Asp-Xaa-Xaa-Asp/Glu (DDXXD/E) motif is important for the catalytic activity, presumably through binding to Mg(2+).</text>
</comment>
<comment type="similarity">
    <text evidence="5">Belongs to the terpene synthase family. Tpsb subfamily.</text>
</comment>